<name>SHSA4_HUMAN</name>
<keyword id="KW-0472">Membrane</keyword>
<keyword id="KW-1267">Proteomics identification</keyword>
<keyword id="KW-1185">Reference proteome</keyword>
<keyword id="KW-0732">Signal</keyword>
<keyword id="KW-0812">Transmembrane</keyword>
<keyword id="KW-1133">Transmembrane helix</keyword>
<organism>
    <name type="scientific">Homo sapiens</name>
    <name type="common">Human</name>
    <dbReference type="NCBI Taxonomy" id="9606"/>
    <lineage>
        <taxon>Eukaryota</taxon>
        <taxon>Metazoa</taxon>
        <taxon>Chordata</taxon>
        <taxon>Craniata</taxon>
        <taxon>Vertebrata</taxon>
        <taxon>Euteleostomi</taxon>
        <taxon>Mammalia</taxon>
        <taxon>Eutheria</taxon>
        <taxon>Euarchontoglires</taxon>
        <taxon>Primates</taxon>
        <taxon>Haplorrhini</taxon>
        <taxon>Catarrhini</taxon>
        <taxon>Hominidae</taxon>
        <taxon>Homo</taxon>
    </lineage>
</organism>
<feature type="signal peptide" evidence="1">
    <location>
        <begin position="1"/>
        <end position="27"/>
    </location>
</feature>
<feature type="chain" id="PRO_0000254090" description="Protein shisa-4">
    <location>
        <begin position="28"/>
        <end position="197"/>
    </location>
</feature>
<feature type="topological domain" description="Extracellular" evidence="1">
    <location>
        <begin position="28"/>
        <end position="87"/>
    </location>
</feature>
<feature type="transmembrane region" description="Helical" evidence="1">
    <location>
        <begin position="88"/>
        <end position="108"/>
    </location>
</feature>
<feature type="topological domain" description="Cytoplasmic" evidence="1">
    <location>
        <begin position="109"/>
        <end position="197"/>
    </location>
</feature>
<feature type="sequence variant" id="VAR_028811" description="In dbSNP:rs2250377." evidence="2 3 4">
    <original>I</original>
    <variation>M</variation>
    <location>
        <position position="159"/>
    </location>
</feature>
<sequence>MPPAGLRRAAPLTAIALLVLGAPLVLAGEDCLWYLDRNGSWHPGFNCEFFTFCCGTCYHRYCCRDLTLLITERQQKHCLAFSPKTIAGIASAVILFVAVVATTICCFLCSCCYLYRRRQQLQSPFEGQEIPMTGIPVQPVYPYPQDPKAGPAPPQPGFIYPPSGPAPQYPLYPAGPPVYNPAAPPPYMPPQPSYPGA</sequence>
<reference key="1">
    <citation type="journal article" date="2003" name="Genome Res.">
        <title>The secreted protein discovery initiative (SPDI), a large-scale effort to identify novel human secreted and transmembrane proteins: a bioinformatics assessment.</title>
        <authorList>
            <person name="Clark H.F."/>
            <person name="Gurney A.L."/>
            <person name="Abaya E."/>
            <person name="Baker K."/>
            <person name="Baldwin D.T."/>
            <person name="Brush J."/>
            <person name="Chen J."/>
            <person name="Chow B."/>
            <person name="Chui C."/>
            <person name="Crowley C."/>
            <person name="Currell B."/>
            <person name="Deuel B."/>
            <person name="Dowd P."/>
            <person name="Eaton D."/>
            <person name="Foster J.S."/>
            <person name="Grimaldi C."/>
            <person name="Gu Q."/>
            <person name="Hass P.E."/>
            <person name="Heldens S."/>
            <person name="Huang A."/>
            <person name="Kim H.S."/>
            <person name="Klimowski L."/>
            <person name="Jin Y."/>
            <person name="Johnson S."/>
            <person name="Lee J."/>
            <person name="Lewis L."/>
            <person name="Liao D."/>
            <person name="Mark M.R."/>
            <person name="Robbie E."/>
            <person name="Sanchez C."/>
            <person name="Schoenfeld J."/>
            <person name="Seshagiri S."/>
            <person name="Simmons L."/>
            <person name="Singh J."/>
            <person name="Smith V."/>
            <person name="Stinson J."/>
            <person name="Vagts A."/>
            <person name="Vandlen R.L."/>
            <person name="Watanabe C."/>
            <person name="Wieand D."/>
            <person name="Woods K."/>
            <person name="Xie M.-H."/>
            <person name="Yansura D.G."/>
            <person name="Yi S."/>
            <person name="Yu G."/>
            <person name="Yuan J."/>
            <person name="Zhang M."/>
            <person name="Zhang Z."/>
            <person name="Goddard A.D."/>
            <person name="Wood W.I."/>
            <person name="Godowski P.J."/>
            <person name="Gray A.M."/>
        </authorList>
    </citation>
    <scope>NUCLEOTIDE SEQUENCE [LARGE SCALE MRNA]</scope>
    <scope>VARIANT MET-159</scope>
</reference>
<reference key="2">
    <citation type="journal article" date="2004" name="Nat. Genet.">
        <title>Complete sequencing and characterization of 21,243 full-length human cDNAs.</title>
        <authorList>
            <person name="Ota T."/>
            <person name="Suzuki Y."/>
            <person name="Nishikawa T."/>
            <person name="Otsuki T."/>
            <person name="Sugiyama T."/>
            <person name="Irie R."/>
            <person name="Wakamatsu A."/>
            <person name="Hayashi K."/>
            <person name="Sato H."/>
            <person name="Nagai K."/>
            <person name="Kimura K."/>
            <person name="Makita H."/>
            <person name="Sekine M."/>
            <person name="Obayashi M."/>
            <person name="Nishi T."/>
            <person name="Shibahara T."/>
            <person name="Tanaka T."/>
            <person name="Ishii S."/>
            <person name="Yamamoto J."/>
            <person name="Saito K."/>
            <person name="Kawai Y."/>
            <person name="Isono Y."/>
            <person name="Nakamura Y."/>
            <person name="Nagahari K."/>
            <person name="Murakami K."/>
            <person name="Yasuda T."/>
            <person name="Iwayanagi T."/>
            <person name="Wagatsuma M."/>
            <person name="Shiratori A."/>
            <person name="Sudo H."/>
            <person name="Hosoiri T."/>
            <person name="Kaku Y."/>
            <person name="Kodaira H."/>
            <person name="Kondo H."/>
            <person name="Sugawara M."/>
            <person name="Takahashi M."/>
            <person name="Kanda K."/>
            <person name="Yokoi T."/>
            <person name="Furuya T."/>
            <person name="Kikkawa E."/>
            <person name="Omura Y."/>
            <person name="Abe K."/>
            <person name="Kamihara K."/>
            <person name="Katsuta N."/>
            <person name="Sato K."/>
            <person name="Tanikawa M."/>
            <person name="Yamazaki M."/>
            <person name="Ninomiya K."/>
            <person name="Ishibashi T."/>
            <person name="Yamashita H."/>
            <person name="Murakawa K."/>
            <person name="Fujimori K."/>
            <person name="Tanai H."/>
            <person name="Kimata M."/>
            <person name="Watanabe M."/>
            <person name="Hiraoka S."/>
            <person name="Chiba Y."/>
            <person name="Ishida S."/>
            <person name="Ono Y."/>
            <person name="Takiguchi S."/>
            <person name="Watanabe S."/>
            <person name="Yosida M."/>
            <person name="Hotuta T."/>
            <person name="Kusano J."/>
            <person name="Kanehori K."/>
            <person name="Takahashi-Fujii A."/>
            <person name="Hara H."/>
            <person name="Tanase T.-O."/>
            <person name="Nomura Y."/>
            <person name="Togiya S."/>
            <person name="Komai F."/>
            <person name="Hara R."/>
            <person name="Takeuchi K."/>
            <person name="Arita M."/>
            <person name="Imose N."/>
            <person name="Musashino K."/>
            <person name="Yuuki H."/>
            <person name="Oshima A."/>
            <person name="Sasaki N."/>
            <person name="Aotsuka S."/>
            <person name="Yoshikawa Y."/>
            <person name="Matsunawa H."/>
            <person name="Ichihara T."/>
            <person name="Shiohata N."/>
            <person name="Sano S."/>
            <person name="Moriya S."/>
            <person name="Momiyama H."/>
            <person name="Satoh N."/>
            <person name="Takami S."/>
            <person name="Terashima Y."/>
            <person name="Suzuki O."/>
            <person name="Nakagawa S."/>
            <person name="Senoh A."/>
            <person name="Mizoguchi H."/>
            <person name="Goto Y."/>
            <person name="Shimizu F."/>
            <person name="Wakebe H."/>
            <person name="Hishigaki H."/>
            <person name="Watanabe T."/>
            <person name="Sugiyama A."/>
            <person name="Takemoto M."/>
            <person name="Kawakami B."/>
            <person name="Yamazaki M."/>
            <person name="Watanabe K."/>
            <person name="Kumagai A."/>
            <person name="Itakura S."/>
            <person name="Fukuzumi Y."/>
            <person name="Fujimori Y."/>
            <person name="Komiyama M."/>
            <person name="Tashiro H."/>
            <person name="Tanigami A."/>
            <person name="Fujiwara T."/>
            <person name="Ono T."/>
            <person name="Yamada K."/>
            <person name="Fujii Y."/>
            <person name="Ozaki K."/>
            <person name="Hirao M."/>
            <person name="Ohmori Y."/>
            <person name="Kawabata A."/>
            <person name="Hikiji T."/>
            <person name="Kobatake N."/>
            <person name="Inagaki H."/>
            <person name="Ikema Y."/>
            <person name="Okamoto S."/>
            <person name="Okitani R."/>
            <person name="Kawakami T."/>
            <person name="Noguchi S."/>
            <person name="Itoh T."/>
            <person name="Shigeta K."/>
            <person name="Senba T."/>
            <person name="Matsumura K."/>
            <person name="Nakajima Y."/>
            <person name="Mizuno T."/>
            <person name="Morinaga M."/>
            <person name="Sasaki M."/>
            <person name="Togashi T."/>
            <person name="Oyama M."/>
            <person name="Hata H."/>
            <person name="Watanabe M."/>
            <person name="Komatsu T."/>
            <person name="Mizushima-Sugano J."/>
            <person name="Satoh T."/>
            <person name="Shirai Y."/>
            <person name="Takahashi Y."/>
            <person name="Nakagawa K."/>
            <person name="Okumura K."/>
            <person name="Nagase T."/>
            <person name="Nomura N."/>
            <person name="Kikuchi H."/>
            <person name="Masuho Y."/>
            <person name="Yamashita R."/>
            <person name="Nakai K."/>
            <person name="Yada T."/>
            <person name="Nakamura Y."/>
            <person name="Ohara O."/>
            <person name="Isogai T."/>
            <person name="Sugano S."/>
        </authorList>
    </citation>
    <scope>NUCLEOTIDE SEQUENCE [LARGE SCALE MRNA]</scope>
    <scope>VARIANT MET-159</scope>
    <source>
        <tissue>Skeletal muscle</tissue>
    </source>
</reference>
<reference key="3">
    <citation type="journal article" date="2006" name="Nature">
        <title>The DNA sequence and biological annotation of human chromosome 1.</title>
        <authorList>
            <person name="Gregory S.G."/>
            <person name="Barlow K.F."/>
            <person name="McLay K.E."/>
            <person name="Kaul R."/>
            <person name="Swarbreck D."/>
            <person name="Dunham A."/>
            <person name="Scott C.E."/>
            <person name="Howe K.L."/>
            <person name="Woodfine K."/>
            <person name="Spencer C.C.A."/>
            <person name="Jones M.C."/>
            <person name="Gillson C."/>
            <person name="Searle S."/>
            <person name="Zhou Y."/>
            <person name="Kokocinski F."/>
            <person name="McDonald L."/>
            <person name="Evans R."/>
            <person name="Phillips K."/>
            <person name="Atkinson A."/>
            <person name="Cooper R."/>
            <person name="Jones C."/>
            <person name="Hall R.E."/>
            <person name="Andrews T.D."/>
            <person name="Lloyd C."/>
            <person name="Ainscough R."/>
            <person name="Almeida J.P."/>
            <person name="Ambrose K.D."/>
            <person name="Anderson F."/>
            <person name="Andrew R.W."/>
            <person name="Ashwell R.I.S."/>
            <person name="Aubin K."/>
            <person name="Babbage A.K."/>
            <person name="Bagguley C.L."/>
            <person name="Bailey J."/>
            <person name="Beasley H."/>
            <person name="Bethel G."/>
            <person name="Bird C.P."/>
            <person name="Bray-Allen S."/>
            <person name="Brown J.Y."/>
            <person name="Brown A.J."/>
            <person name="Buckley D."/>
            <person name="Burton J."/>
            <person name="Bye J."/>
            <person name="Carder C."/>
            <person name="Chapman J.C."/>
            <person name="Clark S.Y."/>
            <person name="Clarke G."/>
            <person name="Clee C."/>
            <person name="Cobley V."/>
            <person name="Collier R.E."/>
            <person name="Corby N."/>
            <person name="Coville G.J."/>
            <person name="Davies J."/>
            <person name="Deadman R."/>
            <person name="Dunn M."/>
            <person name="Earthrowl M."/>
            <person name="Ellington A.G."/>
            <person name="Errington H."/>
            <person name="Frankish A."/>
            <person name="Frankland J."/>
            <person name="French L."/>
            <person name="Garner P."/>
            <person name="Garnett J."/>
            <person name="Gay L."/>
            <person name="Ghori M.R.J."/>
            <person name="Gibson R."/>
            <person name="Gilby L.M."/>
            <person name="Gillett W."/>
            <person name="Glithero R.J."/>
            <person name="Grafham D.V."/>
            <person name="Griffiths C."/>
            <person name="Griffiths-Jones S."/>
            <person name="Grocock R."/>
            <person name="Hammond S."/>
            <person name="Harrison E.S.I."/>
            <person name="Hart E."/>
            <person name="Haugen E."/>
            <person name="Heath P.D."/>
            <person name="Holmes S."/>
            <person name="Holt K."/>
            <person name="Howden P.J."/>
            <person name="Hunt A.R."/>
            <person name="Hunt S.E."/>
            <person name="Hunter G."/>
            <person name="Isherwood J."/>
            <person name="James R."/>
            <person name="Johnson C."/>
            <person name="Johnson D."/>
            <person name="Joy A."/>
            <person name="Kay M."/>
            <person name="Kershaw J.K."/>
            <person name="Kibukawa M."/>
            <person name="Kimberley A.M."/>
            <person name="King A."/>
            <person name="Knights A.J."/>
            <person name="Lad H."/>
            <person name="Laird G."/>
            <person name="Lawlor S."/>
            <person name="Leongamornlert D.A."/>
            <person name="Lloyd D.M."/>
            <person name="Loveland J."/>
            <person name="Lovell J."/>
            <person name="Lush M.J."/>
            <person name="Lyne R."/>
            <person name="Martin S."/>
            <person name="Mashreghi-Mohammadi M."/>
            <person name="Matthews L."/>
            <person name="Matthews N.S.W."/>
            <person name="McLaren S."/>
            <person name="Milne S."/>
            <person name="Mistry S."/>
            <person name="Moore M.J.F."/>
            <person name="Nickerson T."/>
            <person name="O'Dell C.N."/>
            <person name="Oliver K."/>
            <person name="Palmeiri A."/>
            <person name="Palmer S.A."/>
            <person name="Parker A."/>
            <person name="Patel D."/>
            <person name="Pearce A.V."/>
            <person name="Peck A.I."/>
            <person name="Pelan S."/>
            <person name="Phelps K."/>
            <person name="Phillimore B.J."/>
            <person name="Plumb R."/>
            <person name="Rajan J."/>
            <person name="Raymond C."/>
            <person name="Rouse G."/>
            <person name="Saenphimmachak C."/>
            <person name="Sehra H.K."/>
            <person name="Sheridan E."/>
            <person name="Shownkeen R."/>
            <person name="Sims S."/>
            <person name="Skuce C.D."/>
            <person name="Smith M."/>
            <person name="Steward C."/>
            <person name="Subramanian S."/>
            <person name="Sycamore N."/>
            <person name="Tracey A."/>
            <person name="Tromans A."/>
            <person name="Van Helmond Z."/>
            <person name="Wall M."/>
            <person name="Wallis J.M."/>
            <person name="White S."/>
            <person name="Whitehead S.L."/>
            <person name="Wilkinson J.E."/>
            <person name="Willey D.L."/>
            <person name="Williams H."/>
            <person name="Wilming L."/>
            <person name="Wray P.W."/>
            <person name="Wu Z."/>
            <person name="Coulson A."/>
            <person name="Vaudin M."/>
            <person name="Sulston J.E."/>
            <person name="Durbin R.M."/>
            <person name="Hubbard T."/>
            <person name="Wooster R."/>
            <person name="Dunham I."/>
            <person name="Carter N.P."/>
            <person name="McVean G."/>
            <person name="Ross M.T."/>
            <person name="Harrow J."/>
            <person name="Olson M.V."/>
            <person name="Beck S."/>
            <person name="Rogers J."/>
            <person name="Bentley D.R."/>
        </authorList>
    </citation>
    <scope>NUCLEOTIDE SEQUENCE [LARGE SCALE GENOMIC DNA]</scope>
    <source>
        <tissue>Kidney</tissue>
    </source>
</reference>
<reference key="4">
    <citation type="journal article" date="2004" name="Genome Res.">
        <title>The status, quality, and expansion of the NIH full-length cDNA project: the Mammalian Gene Collection (MGC).</title>
        <authorList>
            <consortium name="The MGC Project Team"/>
        </authorList>
    </citation>
    <scope>NUCLEOTIDE SEQUENCE [LARGE SCALE MRNA]</scope>
    <scope>VARIANT MET-159</scope>
    <source>
        <tissue>Brain</tissue>
        <tissue>Kidney</tissue>
        <tissue>Pancreas</tissue>
    </source>
</reference>
<gene>
    <name type="primary">SHISA4</name>
    <name type="synonym">C1orf40</name>
    <name type="synonym">TMEM58</name>
    <name type="ORF">UNQ583/PRO1153</name>
</gene>
<accession>Q96DD7</accession>
<accession>B4DFI0</accession>
<accession>B7ZAJ7</accession>
<accession>Q5VUU1</accession>
<accession>Q6P711</accession>
<accession>Q6UWY7</accession>
<dbReference type="EMBL" id="AY358589">
    <property type="protein sequence ID" value="AAQ88952.1"/>
    <property type="molecule type" value="mRNA"/>
</dbReference>
<dbReference type="EMBL" id="AK294106">
    <property type="protein sequence ID" value="BAG57441.1"/>
    <property type="molecule type" value="mRNA"/>
</dbReference>
<dbReference type="EMBL" id="AK316312">
    <property type="protein sequence ID" value="BAH14683.1"/>
    <property type="molecule type" value="mRNA"/>
</dbReference>
<dbReference type="EMBL" id="AL513217">
    <property type="status" value="NOT_ANNOTATED_CDS"/>
    <property type="molecule type" value="Genomic_DNA"/>
</dbReference>
<dbReference type="EMBL" id="BC009558">
    <property type="protein sequence ID" value="AAH09558.1"/>
    <property type="status" value="ALT_INIT"/>
    <property type="molecule type" value="mRNA"/>
</dbReference>
<dbReference type="EMBL" id="BC061908">
    <property type="protein sequence ID" value="AAH61908.1"/>
    <property type="molecule type" value="mRNA"/>
</dbReference>
<dbReference type="EMBL" id="BC104444">
    <property type="protein sequence ID" value="AAI04445.1"/>
    <property type="molecule type" value="mRNA"/>
</dbReference>
<dbReference type="EMBL" id="BC104445">
    <property type="protein sequence ID" value="AAI04446.1"/>
    <property type="molecule type" value="mRNA"/>
</dbReference>
<dbReference type="EMBL" id="BC111855">
    <property type="protein sequence ID" value="AAI11856.1"/>
    <property type="molecule type" value="mRNA"/>
</dbReference>
<dbReference type="CCDS" id="CCDS1416.1"/>
<dbReference type="RefSeq" id="NP_937792.2">
    <property type="nucleotide sequence ID" value="NM_198149.3"/>
</dbReference>
<dbReference type="RefSeq" id="XP_016855908.1">
    <property type="nucleotide sequence ID" value="XM_017000419.1"/>
</dbReference>
<dbReference type="SMR" id="Q96DD7"/>
<dbReference type="BioGRID" id="127204">
    <property type="interactions" value="12"/>
</dbReference>
<dbReference type="FunCoup" id="Q96DD7">
    <property type="interactions" value="14"/>
</dbReference>
<dbReference type="IntAct" id="Q96DD7">
    <property type="interactions" value="10"/>
</dbReference>
<dbReference type="MINT" id="Q96DD7"/>
<dbReference type="STRING" id="9606.ENSP00000355064"/>
<dbReference type="PhosphoSitePlus" id="Q96DD7"/>
<dbReference type="SwissPalm" id="Q96DD7"/>
<dbReference type="BioMuta" id="SHISA4"/>
<dbReference type="DMDM" id="313104251"/>
<dbReference type="MassIVE" id="Q96DD7"/>
<dbReference type="PaxDb" id="9606-ENSP00000355064"/>
<dbReference type="PeptideAtlas" id="Q96DD7"/>
<dbReference type="ProteomicsDB" id="76282"/>
<dbReference type="Antibodypedia" id="65062">
    <property type="antibodies" value="59 antibodies from 20 providers"/>
</dbReference>
<dbReference type="DNASU" id="149345"/>
<dbReference type="Ensembl" id="ENST00000362011.7">
    <property type="protein sequence ID" value="ENSP00000355064.7"/>
    <property type="gene ID" value="ENSG00000198892.7"/>
</dbReference>
<dbReference type="GeneID" id="149345"/>
<dbReference type="KEGG" id="hsa:149345"/>
<dbReference type="MANE-Select" id="ENST00000362011.7">
    <property type="protein sequence ID" value="ENSP00000355064.7"/>
    <property type="RefSeq nucleotide sequence ID" value="NM_198149.3"/>
    <property type="RefSeq protein sequence ID" value="NP_937792.2"/>
</dbReference>
<dbReference type="UCSC" id="uc001gxa.4">
    <property type="organism name" value="human"/>
</dbReference>
<dbReference type="AGR" id="HGNC:27139"/>
<dbReference type="CTD" id="149345"/>
<dbReference type="GeneCards" id="SHISA4"/>
<dbReference type="HGNC" id="HGNC:27139">
    <property type="gene designation" value="SHISA4"/>
</dbReference>
<dbReference type="HPA" id="ENSG00000198892">
    <property type="expression patterns" value="Tissue enhanced (skeletal)"/>
</dbReference>
<dbReference type="MIM" id="617326">
    <property type="type" value="gene"/>
</dbReference>
<dbReference type="neXtProt" id="NX_Q96DD7"/>
<dbReference type="OpenTargets" id="ENSG00000198892"/>
<dbReference type="PharmGKB" id="PA162403294"/>
<dbReference type="VEuPathDB" id="HostDB:ENSG00000198892"/>
<dbReference type="eggNOG" id="ENOG502RY6V">
    <property type="taxonomic scope" value="Eukaryota"/>
</dbReference>
<dbReference type="GeneTree" id="ENSGT00730000111186"/>
<dbReference type="HOGENOM" id="CLU_110080_0_0_1"/>
<dbReference type="InParanoid" id="Q96DD7"/>
<dbReference type="OMA" id="DCYHRFC"/>
<dbReference type="OrthoDB" id="10010453at2759"/>
<dbReference type="PAN-GO" id="Q96DD7">
    <property type="GO annotations" value="0 GO annotations based on evolutionary models"/>
</dbReference>
<dbReference type="PhylomeDB" id="Q96DD7"/>
<dbReference type="TreeFam" id="TF332572"/>
<dbReference type="PathwayCommons" id="Q96DD7"/>
<dbReference type="SignaLink" id="Q96DD7"/>
<dbReference type="BioGRID-ORCS" id="149345">
    <property type="hits" value="12 hits in 1147 CRISPR screens"/>
</dbReference>
<dbReference type="ChiTaRS" id="SHISA4">
    <property type="organism name" value="human"/>
</dbReference>
<dbReference type="GenomeRNAi" id="149345"/>
<dbReference type="Pharos" id="Q96DD7">
    <property type="development level" value="Tdark"/>
</dbReference>
<dbReference type="PRO" id="PR:Q96DD7"/>
<dbReference type="Proteomes" id="UP000005640">
    <property type="component" value="Chromosome 1"/>
</dbReference>
<dbReference type="RNAct" id="Q96DD7">
    <property type="molecule type" value="protein"/>
</dbReference>
<dbReference type="Bgee" id="ENSG00000198892">
    <property type="expression patterns" value="Expressed in temporal lobe and 99 other cell types or tissues"/>
</dbReference>
<dbReference type="GO" id="GO:0016020">
    <property type="term" value="C:membrane"/>
    <property type="evidence" value="ECO:0007669"/>
    <property type="project" value="UniProtKB-SubCell"/>
</dbReference>
<dbReference type="InterPro" id="IPR026910">
    <property type="entry name" value="Shisa"/>
</dbReference>
<dbReference type="InterPro" id="IPR053891">
    <property type="entry name" value="Shisa_N"/>
</dbReference>
<dbReference type="PANTHER" id="PTHR31395:SF5">
    <property type="entry name" value="PROTEIN SHISA-4"/>
    <property type="match status" value="1"/>
</dbReference>
<dbReference type="PANTHER" id="PTHR31395">
    <property type="entry name" value="SHISA"/>
    <property type="match status" value="1"/>
</dbReference>
<dbReference type="Pfam" id="PF13908">
    <property type="entry name" value="Shisa_N"/>
    <property type="match status" value="1"/>
</dbReference>
<proteinExistence type="evidence at protein level"/>
<comment type="interaction">
    <interactant intactId="EBI-18035902">
        <id>Q96DD7</id>
    </interactant>
    <interactant intactId="EBI-12172273">
        <id>O95406</id>
        <label>CNIH1</label>
    </interactant>
    <organismsDiffer>false</organismsDiffer>
    <experiments>3</experiments>
</comment>
<comment type="interaction">
    <interactant intactId="EBI-18035902">
        <id>Q96DD7</id>
    </interactant>
    <interactant intactId="EBI-2680384">
        <id>Q9BQA9</id>
        <label>CYBC1</label>
    </interactant>
    <organismsDiffer>false</organismsDiffer>
    <experiments>3</experiments>
</comment>
<comment type="interaction">
    <interactant intactId="EBI-18035902">
        <id>Q96DD7</id>
    </interactant>
    <interactant intactId="EBI-2806959">
        <id>Q6ICB0</id>
        <label>DESI1</label>
    </interactant>
    <organismsDiffer>false</organismsDiffer>
    <experiments>3</experiments>
</comment>
<comment type="interaction">
    <interactant intactId="EBI-18035902">
        <id>Q96DD7</id>
    </interactant>
    <interactant intactId="EBI-3932027">
        <id>P21145</id>
        <label>MAL</label>
    </interactant>
    <organismsDiffer>false</organismsDiffer>
    <experiments>3</experiments>
</comment>
<comment type="interaction">
    <interactant intactId="EBI-18035902">
        <id>Q96DD7</id>
    </interactant>
    <interactant intactId="EBI-347996">
        <id>O43765</id>
        <label>SGTA</label>
    </interactant>
    <organismsDiffer>false</organismsDiffer>
    <experiments>3</experiments>
</comment>
<comment type="interaction">
    <interactant intactId="EBI-18035902">
        <id>Q96DD7</id>
    </interactant>
    <interactant intactId="EBI-12045841">
        <id>Q86UF1</id>
        <label>TSPAN33</label>
    </interactant>
    <organismsDiffer>false</organismsDiffer>
    <experiments>3</experiments>
</comment>
<comment type="interaction">
    <interactant intactId="EBI-18035902">
        <id>Q96DD7</id>
    </interactant>
    <interactant intactId="EBI-1050671">
        <id>Q13404</id>
        <label>UBE2V1</label>
    </interactant>
    <organismsDiffer>false</organismsDiffer>
    <experiments>3</experiments>
</comment>
<comment type="interaction">
    <interactant intactId="EBI-18035902">
        <id>Q96DD7</id>
    </interactant>
    <interactant intactId="EBI-12237619">
        <id>O75841</id>
        <label>UPK1B</label>
    </interactant>
    <organismsDiffer>false</organismsDiffer>
    <experiments>3</experiments>
</comment>
<comment type="subcellular location">
    <subcellularLocation>
        <location evidence="5">Membrane</location>
        <topology evidence="5">Single-pass type I membrane protein</topology>
    </subcellularLocation>
</comment>
<comment type="similarity">
    <text evidence="5">Belongs to the shisa family.</text>
</comment>
<comment type="sequence caution" evidence="5">
    <conflict type="erroneous initiation">
        <sequence resource="EMBL-CDS" id="AAH09558"/>
    </conflict>
    <text>Extended N-terminus.</text>
</comment>
<protein>
    <recommendedName>
        <fullName>Protein shisa-4</fullName>
    </recommendedName>
    <alternativeName>
        <fullName>Transmembrane protein 58</fullName>
    </alternativeName>
</protein>
<evidence type="ECO:0000255" key="1"/>
<evidence type="ECO:0000269" key="2">
    <source>
    </source>
</evidence>
<evidence type="ECO:0000269" key="3">
    <source>
    </source>
</evidence>
<evidence type="ECO:0000269" key="4">
    <source>
    </source>
</evidence>
<evidence type="ECO:0000305" key="5"/>